<gene>
    <name evidence="1" type="primary">rpsG</name>
    <name type="ordered locus">Mchl_2436</name>
</gene>
<sequence>MSRRHSAEKREIIPDAKYGDVVLTKFMNSIMYEGKKSTAERIVYGAFDIVENRARANPIEVFRAALDNVAPAIEVRSRRVGGATYQVPVEVRTERRQALAIRWLIQAARGRNDRTMIERLSAELLDAANNRGNAVKKREDTHRMAEANRAFSHYRW</sequence>
<protein>
    <recommendedName>
        <fullName evidence="1">Small ribosomal subunit protein uS7</fullName>
    </recommendedName>
    <alternativeName>
        <fullName evidence="2">30S ribosomal protein S7</fullName>
    </alternativeName>
</protein>
<comment type="function">
    <text evidence="1">One of the primary rRNA binding proteins, it binds directly to 16S rRNA where it nucleates assembly of the head domain of the 30S subunit. Is located at the subunit interface close to the decoding center, probably blocks exit of the E-site tRNA.</text>
</comment>
<comment type="subunit">
    <text evidence="1">Part of the 30S ribosomal subunit. Contacts proteins S9 and S11.</text>
</comment>
<comment type="similarity">
    <text evidence="1">Belongs to the universal ribosomal protein uS7 family.</text>
</comment>
<feature type="chain" id="PRO_1000135610" description="Small ribosomal subunit protein uS7">
    <location>
        <begin position="1"/>
        <end position="156"/>
    </location>
</feature>
<proteinExistence type="inferred from homology"/>
<organism>
    <name type="scientific">Methylorubrum extorquens (strain CM4 / NCIMB 13688)</name>
    <name type="common">Methylobacterium extorquens</name>
    <dbReference type="NCBI Taxonomy" id="440085"/>
    <lineage>
        <taxon>Bacteria</taxon>
        <taxon>Pseudomonadati</taxon>
        <taxon>Pseudomonadota</taxon>
        <taxon>Alphaproteobacteria</taxon>
        <taxon>Hyphomicrobiales</taxon>
        <taxon>Methylobacteriaceae</taxon>
        <taxon>Methylorubrum</taxon>
    </lineage>
</organism>
<reference key="1">
    <citation type="submission" date="2008-12" db="EMBL/GenBank/DDBJ databases">
        <title>Complete sequence of chromosome of Methylobacterium chloromethanicum CM4.</title>
        <authorList>
            <consortium name="US DOE Joint Genome Institute"/>
            <person name="Lucas S."/>
            <person name="Copeland A."/>
            <person name="Lapidus A."/>
            <person name="Glavina del Rio T."/>
            <person name="Dalin E."/>
            <person name="Tice H."/>
            <person name="Bruce D."/>
            <person name="Goodwin L."/>
            <person name="Pitluck S."/>
            <person name="Chertkov O."/>
            <person name="Brettin T."/>
            <person name="Detter J.C."/>
            <person name="Han C."/>
            <person name="Larimer F."/>
            <person name="Land M."/>
            <person name="Hauser L."/>
            <person name="Kyrpides N."/>
            <person name="Mikhailova N."/>
            <person name="Marx C."/>
            <person name="Richardson P."/>
        </authorList>
    </citation>
    <scope>NUCLEOTIDE SEQUENCE [LARGE SCALE GENOMIC DNA]</scope>
    <source>
        <strain>CM4 / NCIMB 13688</strain>
    </source>
</reference>
<keyword id="KW-0687">Ribonucleoprotein</keyword>
<keyword id="KW-0689">Ribosomal protein</keyword>
<keyword id="KW-0694">RNA-binding</keyword>
<keyword id="KW-0699">rRNA-binding</keyword>
<keyword id="KW-0820">tRNA-binding</keyword>
<name>RS7_METC4</name>
<accession>B7L0Q7</accession>
<evidence type="ECO:0000255" key="1">
    <source>
        <dbReference type="HAMAP-Rule" id="MF_00480"/>
    </source>
</evidence>
<evidence type="ECO:0000305" key="2"/>
<dbReference type="EMBL" id="CP001298">
    <property type="protein sequence ID" value="ACK83278.1"/>
    <property type="molecule type" value="Genomic_DNA"/>
</dbReference>
<dbReference type="RefSeq" id="WP_004447768.1">
    <property type="nucleotide sequence ID" value="NC_011757.1"/>
</dbReference>
<dbReference type="SMR" id="B7L0Q7"/>
<dbReference type="GeneID" id="72989846"/>
<dbReference type="KEGG" id="mch:Mchl_2436"/>
<dbReference type="HOGENOM" id="CLU_072226_1_1_5"/>
<dbReference type="Proteomes" id="UP000002385">
    <property type="component" value="Chromosome"/>
</dbReference>
<dbReference type="GO" id="GO:0015935">
    <property type="term" value="C:small ribosomal subunit"/>
    <property type="evidence" value="ECO:0007669"/>
    <property type="project" value="InterPro"/>
</dbReference>
<dbReference type="GO" id="GO:0019843">
    <property type="term" value="F:rRNA binding"/>
    <property type="evidence" value="ECO:0007669"/>
    <property type="project" value="UniProtKB-UniRule"/>
</dbReference>
<dbReference type="GO" id="GO:0003735">
    <property type="term" value="F:structural constituent of ribosome"/>
    <property type="evidence" value="ECO:0007669"/>
    <property type="project" value="InterPro"/>
</dbReference>
<dbReference type="GO" id="GO:0000049">
    <property type="term" value="F:tRNA binding"/>
    <property type="evidence" value="ECO:0007669"/>
    <property type="project" value="UniProtKB-UniRule"/>
</dbReference>
<dbReference type="GO" id="GO:0006412">
    <property type="term" value="P:translation"/>
    <property type="evidence" value="ECO:0007669"/>
    <property type="project" value="UniProtKB-UniRule"/>
</dbReference>
<dbReference type="CDD" id="cd14869">
    <property type="entry name" value="uS7_Bacteria"/>
    <property type="match status" value="1"/>
</dbReference>
<dbReference type="FunFam" id="1.10.455.10:FF:000001">
    <property type="entry name" value="30S ribosomal protein S7"/>
    <property type="match status" value="1"/>
</dbReference>
<dbReference type="Gene3D" id="1.10.455.10">
    <property type="entry name" value="Ribosomal protein S7 domain"/>
    <property type="match status" value="1"/>
</dbReference>
<dbReference type="HAMAP" id="MF_00480_B">
    <property type="entry name" value="Ribosomal_uS7_B"/>
    <property type="match status" value="1"/>
</dbReference>
<dbReference type="InterPro" id="IPR000235">
    <property type="entry name" value="Ribosomal_uS7"/>
</dbReference>
<dbReference type="InterPro" id="IPR005717">
    <property type="entry name" value="Ribosomal_uS7_bac/org-type"/>
</dbReference>
<dbReference type="InterPro" id="IPR020606">
    <property type="entry name" value="Ribosomal_uS7_CS"/>
</dbReference>
<dbReference type="InterPro" id="IPR023798">
    <property type="entry name" value="Ribosomal_uS7_dom"/>
</dbReference>
<dbReference type="InterPro" id="IPR036823">
    <property type="entry name" value="Ribosomal_uS7_dom_sf"/>
</dbReference>
<dbReference type="NCBIfam" id="TIGR01029">
    <property type="entry name" value="rpsG_bact"/>
    <property type="match status" value="1"/>
</dbReference>
<dbReference type="PANTHER" id="PTHR11205">
    <property type="entry name" value="RIBOSOMAL PROTEIN S7"/>
    <property type="match status" value="1"/>
</dbReference>
<dbReference type="Pfam" id="PF00177">
    <property type="entry name" value="Ribosomal_S7"/>
    <property type="match status" value="1"/>
</dbReference>
<dbReference type="PIRSF" id="PIRSF002122">
    <property type="entry name" value="RPS7p_RPS7a_RPS5e_RPS7o"/>
    <property type="match status" value="1"/>
</dbReference>
<dbReference type="SUPFAM" id="SSF47973">
    <property type="entry name" value="Ribosomal protein S7"/>
    <property type="match status" value="1"/>
</dbReference>
<dbReference type="PROSITE" id="PS00052">
    <property type="entry name" value="RIBOSOMAL_S7"/>
    <property type="match status" value="1"/>
</dbReference>